<name>SRP54_HAEIN</name>
<sequence length="462" mass="50843">MFENLSDRLSKTLRNITGKGRLTEDNIKETLREVRMALLEADVALPVVREFIAKVKESALGEEVNKSLTPGQEFLKIVQRELEKAMGEANESLNLATQPPAVILMAGLQGAGKTTSVGKLAKFLRERHKKKVLVVSADVYRPAAIKQLETLAQSVGVDFFPSDVKQNPVDIAKSALADAKLKFYDVLIVDTAGRLHVDTEMMDEIKQVHAALNPIETLFTVDAMTGQDAANTAKAFNEALPLTGVILTKVDGDARGGAALSIRQITGKPIKFLGVGEKTEALEPFHPDRVASRILGMGDVLSLIEDLERSVDREKAEKMAQKFKKGDDFTLDDFREQLIEMKKMGGMMSMLEKLPGAKNLSEHVKNQVDDKMFVKMEAIINSMTLKERANPDIIKGSRRRRIALGSGTQVQDVNKLLKQFDEMQRMMKKMRKGGMAKMMRGMQGLMGGGLGGLGGLGGMFKR</sequence>
<comment type="function">
    <text evidence="1">Involved in targeting and insertion of nascent membrane proteins into the cytoplasmic membrane. Binds to the hydrophobic signal sequence of the ribosome-nascent chain (RNC) as it emerges from the ribosomes. The SRP-RNC complex is then targeted to the cytoplasmic membrane where it interacts with the SRP receptor FtsY. Interaction with FtsY leads to the transfer of the RNC complex to the Sec translocase for insertion into the membrane, the hydrolysis of GTP by both Ffh and FtsY, and the dissociation of the SRP-FtsY complex into the individual components.</text>
</comment>
<comment type="catalytic activity">
    <reaction evidence="1">
        <text>GTP + H2O = GDP + phosphate + H(+)</text>
        <dbReference type="Rhea" id="RHEA:19669"/>
        <dbReference type="ChEBI" id="CHEBI:15377"/>
        <dbReference type="ChEBI" id="CHEBI:15378"/>
        <dbReference type="ChEBI" id="CHEBI:37565"/>
        <dbReference type="ChEBI" id="CHEBI:43474"/>
        <dbReference type="ChEBI" id="CHEBI:58189"/>
        <dbReference type="EC" id="3.6.5.4"/>
    </reaction>
</comment>
<comment type="subunit">
    <text evidence="1">Part of the signal recognition particle protein translocation system, which is composed of SRP and FtsY. SRP is a ribonucleoprotein composed of Ffh and a 4.5S RNA molecule.</text>
</comment>
<comment type="subcellular location">
    <subcellularLocation>
        <location evidence="1">Cytoplasm</location>
    </subcellularLocation>
    <text evidence="1">The SRP-RNC complex is targeted to the cytoplasmic membrane.</text>
</comment>
<comment type="domain">
    <text evidence="1">Composed of three domains: the N-terminal N domain, which is responsible for interactions with the ribosome, the central G domain, which binds GTP, and the C-terminal M domain, which binds the RNA and the signal sequence of the RNC.</text>
</comment>
<comment type="similarity">
    <text evidence="1">Belongs to the GTP-binding SRP family. SRP54 subfamily.</text>
</comment>
<dbReference type="EC" id="3.6.5.4" evidence="1"/>
<dbReference type="EMBL" id="L42023">
    <property type="protein sequence ID" value="AAC21784.1"/>
    <property type="molecule type" value="Genomic_DNA"/>
</dbReference>
<dbReference type="PIR" id="H64048">
    <property type="entry name" value="H64048"/>
</dbReference>
<dbReference type="RefSeq" id="NP_438280.1">
    <property type="nucleotide sequence ID" value="NC_000907.1"/>
</dbReference>
<dbReference type="SMR" id="P44518"/>
<dbReference type="STRING" id="71421.HI_0106"/>
<dbReference type="EnsemblBacteria" id="AAC21784">
    <property type="protein sequence ID" value="AAC21784"/>
    <property type="gene ID" value="HI_0106"/>
</dbReference>
<dbReference type="KEGG" id="hin:HI_0106"/>
<dbReference type="PATRIC" id="fig|71421.8.peg.109"/>
<dbReference type="eggNOG" id="COG0541">
    <property type="taxonomic scope" value="Bacteria"/>
</dbReference>
<dbReference type="HOGENOM" id="CLU_009301_6_0_6"/>
<dbReference type="OrthoDB" id="9804720at2"/>
<dbReference type="PhylomeDB" id="P44518"/>
<dbReference type="BioCyc" id="HINF71421:G1GJ1-110-MONOMER"/>
<dbReference type="Proteomes" id="UP000000579">
    <property type="component" value="Chromosome"/>
</dbReference>
<dbReference type="GO" id="GO:0048500">
    <property type="term" value="C:signal recognition particle"/>
    <property type="evidence" value="ECO:0007669"/>
    <property type="project" value="UniProtKB-UniRule"/>
</dbReference>
<dbReference type="GO" id="GO:0008312">
    <property type="term" value="F:7S RNA binding"/>
    <property type="evidence" value="ECO:0007669"/>
    <property type="project" value="InterPro"/>
</dbReference>
<dbReference type="GO" id="GO:0016887">
    <property type="term" value="F:ATP hydrolysis activity"/>
    <property type="evidence" value="ECO:0007669"/>
    <property type="project" value="InterPro"/>
</dbReference>
<dbReference type="GO" id="GO:0005525">
    <property type="term" value="F:GTP binding"/>
    <property type="evidence" value="ECO:0007669"/>
    <property type="project" value="UniProtKB-UniRule"/>
</dbReference>
<dbReference type="GO" id="GO:0003924">
    <property type="term" value="F:GTPase activity"/>
    <property type="evidence" value="ECO:0007669"/>
    <property type="project" value="UniProtKB-UniRule"/>
</dbReference>
<dbReference type="GO" id="GO:0006614">
    <property type="term" value="P:SRP-dependent cotranslational protein targeting to membrane"/>
    <property type="evidence" value="ECO:0007669"/>
    <property type="project" value="InterPro"/>
</dbReference>
<dbReference type="CDD" id="cd18539">
    <property type="entry name" value="SRP_G"/>
    <property type="match status" value="1"/>
</dbReference>
<dbReference type="FunFam" id="3.40.50.300:FF:000022">
    <property type="entry name" value="Signal recognition particle 54 kDa subunit"/>
    <property type="match status" value="1"/>
</dbReference>
<dbReference type="FunFam" id="1.10.260.30:FF:000001">
    <property type="entry name" value="Signal recognition particle protein"/>
    <property type="match status" value="1"/>
</dbReference>
<dbReference type="Gene3D" id="3.40.50.300">
    <property type="entry name" value="P-loop containing nucleotide triphosphate hydrolases"/>
    <property type="match status" value="1"/>
</dbReference>
<dbReference type="Gene3D" id="1.20.120.140">
    <property type="entry name" value="Signal recognition particle SRP54, nucleotide-binding domain"/>
    <property type="match status" value="1"/>
</dbReference>
<dbReference type="Gene3D" id="1.10.260.30">
    <property type="entry name" value="Signal recognition particle, SRP54 subunit, M-domain"/>
    <property type="match status" value="1"/>
</dbReference>
<dbReference type="HAMAP" id="MF_00306">
    <property type="entry name" value="SRP54"/>
    <property type="match status" value="1"/>
</dbReference>
<dbReference type="InterPro" id="IPR003593">
    <property type="entry name" value="AAA+_ATPase"/>
</dbReference>
<dbReference type="InterPro" id="IPR027417">
    <property type="entry name" value="P-loop_NTPase"/>
</dbReference>
<dbReference type="InterPro" id="IPR036891">
    <property type="entry name" value="Signal_recog_part_SRP54_M_sf"/>
</dbReference>
<dbReference type="InterPro" id="IPR013822">
    <property type="entry name" value="Signal_recog_particl_SRP54_hlx"/>
</dbReference>
<dbReference type="InterPro" id="IPR004125">
    <property type="entry name" value="Signal_recog_particle_SRP54_M"/>
</dbReference>
<dbReference type="InterPro" id="IPR004780">
    <property type="entry name" value="SRP"/>
</dbReference>
<dbReference type="InterPro" id="IPR022941">
    <property type="entry name" value="SRP54"/>
</dbReference>
<dbReference type="InterPro" id="IPR000897">
    <property type="entry name" value="SRP54_GTPase_dom"/>
</dbReference>
<dbReference type="InterPro" id="IPR042101">
    <property type="entry name" value="SRP54_N_sf"/>
</dbReference>
<dbReference type="NCBIfam" id="TIGR00959">
    <property type="entry name" value="ffh"/>
    <property type="match status" value="1"/>
</dbReference>
<dbReference type="PANTHER" id="PTHR11564">
    <property type="entry name" value="SIGNAL RECOGNITION PARTICLE 54K PROTEIN SRP54"/>
    <property type="match status" value="1"/>
</dbReference>
<dbReference type="PANTHER" id="PTHR11564:SF5">
    <property type="entry name" value="SIGNAL RECOGNITION PARTICLE SUBUNIT SRP54"/>
    <property type="match status" value="1"/>
</dbReference>
<dbReference type="Pfam" id="PF00448">
    <property type="entry name" value="SRP54"/>
    <property type="match status" value="1"/>
</dbReference>
<dbReference type="Pfam" id="PF02881">
    <property type="entry name" value="SRP54_N"/>
    <property type="match status" value="1"/>
</dbReference>
<dbReference type="Pfam" id="PF02978">
    <property type="entry name" value="SRP_SPB"/>
    <property type="match status" value="1"/>
</dbReference>
<dbReference type="SMART" id="SM00382">
    <property type="entry name" value="AAA"/>
    <property type="match status" value="1"/>
</dbReference>
<dbReference type="SMART" id="SM00962">
    <property type="entry name" value="SRP54"/>
    <property type="match status" value="1"/>
</dbReference>
<dbReference type="SMART" id="SM00963">
    <property type="entry name" value="SRP54_N"/>
    <property type="match status" value="1"/>
</dbReference>
<dbReference type="SUPFAM" id="SSF52540">
    <property type="entry name" value="P-loop containing nucleoside triphosphate hydrolases"/>
    <property type="match status" value="1"/>
</dbReference>
<dbReference type="SUPFAM" id="SSF47446">
    <property type="entry name" value="Signal peptide-binding domain"/>
    <property type="match status" value="1"/>
</dbReference>
<dbReference type="PROSITE" id="PS00300">
    <property type="entry name" value="SRP54"/>
    <property type="match status" value="1"/>
</dbReference>
<feature type="chain" id="PRO_0000101156" description="Signal recognition particle protein">
    <location>
        <begin position="1"/>
        <end position="462"/>
    </location>
</feature>
<feature type="binding site" evidence="1">
    <location>
        <begin position="107"/>
        <end position="114"/>
    </location>
    <ligand>
        <name>GTP</name>
        <dbReference type="ChEBI" id="CHEBI:37565"/>
    </ligand>
</feature>
<feature type="binding site" evidence="1">
    <location>
        <begin position="190"/>
        <end position="194"/>
    </location>
    <ligand>
        <name>GTP</name>
        <dbReference type="ChEBI" id="CHEBI:37565"/>
    </ligand>
</feature>
<feature type="binding site" evidence="1">
    <location>
        <begin position="248"/>
        <end position="251"/>
    </location>
    <ligand>
        <name>GTP</name>
        <dbReference type="ChEBI" id="CHEBI:37565"/>
    </ligand>
</feature>
<protein>
    <recommendedName>
        <fullName evidence="1">Signal recognition particle protein</fullName>
        <ecNumber evidence="1">3.6.5.4</ecNumber>
    </recommendedName>
    <alternativeName>
        <fullName evidence="1">Fifty-four homolog</fullName>
    </alternativeName>
</protein>
<accession>P44518</accession>
<proteinExistence type="inferred from homology"/>
<organism>
    <name type="scientific">Haemophilus influenzae (strain ATCC 51907 / DSM 11121 / KW20 / Rd)</name>
    <dbReference type="NCBI Taxonomy" id="71421"/>
    <lineage>
        <taxon>Bacteria</taxon>
        <taxon>Pseudomonadati</taxon>
        <taxon>Pseudomonadota</taxon>
        <taxon>Gammaproteobacteria</taxon>
        <taxon>Pasteurellales</taxon>
        <taxon>Pasteurellaceae</taxon>
        <taxon>Haemophilus</taxon>
    </lineage>
</organism>
<evidence type="ECO:0000255" key="1">
    <source>
        <dbReference type="HAMAP-Rule" id="MF_00306"/>
    </source>
</evidence>
<gene>
    <name evidence="1" type="primary">ffh</name>
    <name type="ordered locus">HI_0106</name>
</gene>
<reference key="1">
    <citation type="journal article" date="1995" name="Science">
        <title>Whole-genome random sequencing and assembly of Haemophilus influenzae Rd.</title>
        <authorList>
            <person name="Fleischmann R.D."/>
            <person name="Adams M.D."/>
            <person name="White O."/>
            <person name="Clayton R.A."/>
            <person name="Kirkness E.F."/>
            <person name="Kerlavage A.R."/>
            <person name="Bult C.J."/>
            <person name="Tomb J.-F."/>
            <person name="Dougherty B.A."/>
            <person name="Merrick J.M."/>
            <person name="McKenney K."/>
            <person name="Sutton G.G."/>
            <person name="FitzHugh W."/>
            <person name="Fields C.A."/>
            <person name="Gocayne J.D."/>
            <person name="Scott J.D."/>
            <person name="Shirley R."/>
            <person name="Liu L.-I."/>
            <person name="Glodek A."/>
            <person name="Kelley J.M."/>
            <person name="Weidman J.F."/>
            <person name="Phillips C.A."/>
            <person name="Spriggs T."/>
            <person name="Hedblom E."/>
            <person name="Cotton M.D."/>
            <person name="Utterback T.R."/>
            <person name="Hanna M.C."/>
            <person name="Nguyen D.T."/>
            <person name="Saudek D.M."/>
            <person name="Brandon R.C."/>
            <person name="Fine L.D."/>
            <person name="Fritchman J.L."/>
            <person name="Fuhrmann J.L."/>
            <person name="Geoghagen N.S.M."/>
            <person name="Gnehm C.L."/>
            <person name="McDonald L.A."/>
            <person name="Small K.V."/>
            <person name="Fraser C.M."/>
            <person name="Smith H.O."/>
            <person name="Venter J.C."/>
        </authorList>
    </citation>
    <scope>NUCLEOTIDE SEQUENCE [LARGE SCALE GENOMIC DNA]</scope>
    <source>
        <strain>ATCC 51907 / DSM 11121 / KW20 / Rd</strain>
    </source>
</reference>
<keyword id="KW-0963">Cytoplasm</keyword>
<keyword id="KW-0342">GTP-binding</keyword>
<keyword id="KW-0378">Hydrolase</keyword>
<keyword id="KW-0547">Nucleotide-binding</keyword>
<keyword id="KW-1185">Reference proteome</keyword>
<keyword id="KW-0687">Ribonucleoprotein</keyword>
<keyword id="KW-0694">RNA-binding</keyword>
<keyword id="KW-0733">Signal recognition particle</keyword>